<keyword id="KW-0030">Aminoacyl-tRNA synthetase</keyword>
<keyword id="KW-0067">ATP-binding</keyword>
<keyword id="KW-0963">Cytoplasm</keyword>
<keyword id="KW-0436">Ligase</keyword>
<keyword id="KW-0547">Nucleotide-binding</keyword>
<keyword id="KW-0648">Protein biosynthesis</keyword>
<protein>
    <recommendedName>
        <fullName evidence="1">Histidine--tRNA ligase</fullName>
        <ecNumber evidence="1">6.1.1.21</ecNumber>
    </recommendedName>
    <alternativeName>
        <fullName evidence="1">Histidyl-tRNA synthetase</fullName>
        <shortName evidence="1">HisRS</shortName>
    </alternativeName>
</protein>
<organism>
    <name type="scientific">Dictyoglomus thermophilum (strain ATCC 35947 / DSM 3960 / H-6-12)</name>
    <dbReference type="NCBI Taxonomy" id="309799"/>
    <lineage>
        <taxon>Bacteria</taxon>
        <taxon>Pseudomonadati</taxon>
        <taxon>Dictyoglomota</taxon>
        <taxon>Dictyoglomia</taxon>
        <taxon>Dictyoglomales</taxon>
        <taxon>Dictyoglomaceae</taxon>
        <taxon>Dictyoglomus</taxon>
    </lineage>
</organism>
<proteinExistence type="inferred from homology"/>
<feature type="chain" id="PRO_1000095550" description="Histidine--tRNA ligase">
    <location>
        <begin position="1"/>
        <end position="416"/>
    </location>
</feature>
<evidence type="ECO:0000255" key="1">
    <source>
        <dbReference type="HAMAP-Rule" id="MF_00127"/>
    </source>
</evidence>
<reference key="1">
    <citation type="journal article" date="2014" name="Genome Announc.">
        <title>Complete Genome Sequence of the Extreme Thermophile Dictyoglomus thermophilum H-6-12.</title>
        <authorList>
            <person name="Coil D.A."/>
            <person name="Badger J.H."/>
            <person name="Forberger H.C."/>
            <person name="Riggs F."/>
            <person name="Madupu R."/>
            <person name="Fedorova N."/>
            <person name="Ward N."/>
            <person name="Robb F.T."/>
            <person name="Eisen J.A."/>
        </authorList>
    </citation>
    <scope>NUCLEOTIDE SEQUENCE [LARGE SCALE GENOMIC DNA]</scope>
    <source>
        <strain>ATCC 35947 / DSM 3960 / H-6-12</strain>
    </source>
</reference>
<accession>B5YDT1</accession>
<name>SYH_DICT6</name>
<sequence length="416" mass="48422">MNLGIPRGVQDILPDETPFWHLIENTARNLFEKYNYEEIRTPIFEFTELFIKGTGETTDIVMKEMYTFQDKKGRSLTLRPEGTPGVIRAYLMNKVYATTPIWKVYYIGPMFRYERPQAGRYRQFHQLGVEVLGRKDPYIDFEIINLAIEFLKTLELENLEVEINSLGCTKCRPAYREALKNYFSQYKDILSHIDQERLERNPLRILDSKDEKIIPLKENAPQPLDFLCDDCKNHFEKVLNYMKEADLSFKISPKLVRGLDYYTRTVFEITTTSLGAQNAVVGGGRYDNLVETYGGPSTPGLGFALGIERLILLLKQQNKIKIERPSLIFIAIEKEKYVKKAMEIAKTLRTNYRVEMGSPEESLRTQLKWADKLNSDYVIFVNQGIENNILKIKNFKTGEEKEIKIKDIKELQHIVL</sequence>
<comment type="catalytic activity">
    <reaction evidence="1">
        <text>tRNA(His) + L-histidine + ATP = L-histidyl-tRNA(His) + AMP + diphosphate + H(+)</text>
        <dbReference type="Rhea" id="RHEA:17313"/>
        <dbReference type="Rhea" id="RHEA-COMP:9665"/>
        <dbReference type="Rhea" id="RHEA-COMP:9689"/>
        <dbReference type="ChEBI" id="CHEBI:15378"/>
        <dbReference type="ChEBI" id="CHEBI:30616"/>
        <dbReference type="ChEBI" id="CHEBI:33019"/>
        <dbReference type="ChEBI" id="CHEBI:57595"/>
        <dbReference type="ChEBI" id="CHEBI:78442"/>
        <dbReference type="ChEBI" id="CHEBI:78527"/>
        <dbReference type="ChEBI" id="CHEBI:456215"/>
        <dbReference type="EC" id="6.1.1.21"/>
    </reaction>
</comment>
<comment type="subunit">
    <text evidence="1">Homodimer.</text>
</comment>
<comment type="subcellular location">
    <subcellularLocation>
        <location evidence="1">Cytoplasm</location>
    </subcellularLocation>
</comment>
<comment type="similarity">
    <text evidence="1">Belongs to the class-II aminoacyl-tRNA synthetase family.</text>
</comment>
<gene>
    <name evidence="1" type="primary">hisS</name>
    <name type="ordered locus">DICTH_0825</name>
</gene>
<dbReference type="EC" id="6.1.1.21" evidence="1"/>
<dbReference type="EMBL" id="CP001146">
    <property type="protein sequence ID" value="ACI18869.1"/>
    <property type="molecule type" value="Genomic_DNA"/>
</dbReference>
<dbReference type="RefSeq" id="WP_012547501.1">
    <property type="nucleotide sequence ID" value="NC_011297.1"/>
</dbReference>
<dbReference type="SMR" id="B5YDT1"/>
<dbReference type="STRING" id="309799.DICTH_0825"/>
<dbReference type="PaxDb" id="309799-DICTH_0825"/>
<dbReference type="KEGG" id="dth:DICTH_0825"/>
<dbReference type="eggNOG" id="COG0124">
    <property type="taxonomic scope" value="Bacteria"/>
</dbReference>
<dbReference type="HOGENOM" id="CLU_025113_1_1_0"/>
<dbReference type="OrthoDB" id="9800814at2"/>
<dbReference type="Proteomes" id="UP000001733">
    <property type="component" value="Chromosome"/>
</dbReference>
<dbReference type="GO" id="GO:0005737">
    <property type="term" value="C:cytoplasm"/>
    <property type="evidence" value="ECO:0007669"/>
    <property type="project" value="UniProtKB-SubCell"/>
</dbReference>
<dbReference type="GO" id="GO:0005524">
    <property type="term" value="F:ATP binding"/>
    <property type="evidence" value="ECO:0007669"/>
    <property type="project" value="UniProtKB-UniRule"/>
</dbReference>
<dbReference type="GO" id="GO:0004821">
    <property type="term" value="F:histidine-tRNA ligase activity"/>
    <property type="evidence" value="ECO:0007669"/>
    <property type="project" value="UniProtKB-UniRule"/>
</dbReference>
<dbReference type="GO" id="GO:0006427">
    <property type="term" value="P:histidyl-tRNA aminoacylation"/>
    <property type="evidence" value="ECO:0007669"/>
    <property type="project" value="UniProtKB-UniRule"/>
</dbReference>
<dbReference type="CDD" id="cd00773">
    <property type="entry name" value="HisRS-like_core"/>
    <property type="match status" value="1"/>
</dbReference>
<dbReference type="FunFam" id="3.30.930.10:FF:000005">
    <property type="entry name" value="Histidine--tRNA ligase"/>
    <property type="match status" value="1"/>
</dbReference>
<dbReference type="Gene3D" id="3.40.50.800">
    <property type="entry name" value="Anticodon-binding domain"/>
    <property type="match status" value="1"/>
</dbReference>
<dbReference type="Gene3D" id="3.30.930.10">
    <property type="entry name" value="Bira Bifunctional Protein, Domain 2"/>
    <property type="match status" value="1"/>
</dbReference>
<dbReference type="HAMAP" id="MF_00127">
    <property type="entry name" value="His_tRNA_synth"/>
    <property type="match status" value="1"/>
</dbReference>
<dbReference type="InterPro" id="IPR006195">
    <property type="entry name" value="aa-tRNA-synth_II"/>
</dbReference>
<dbReference type="InterPro" id="IPR045864">
    <property type="entry name" value="aa-tRNA-synth_II/BPL/LPL"/>
</dbReference>
<dbReference type="InterPro" id="IPR004154">
    <property type="entry name" value="Anticodon-bd"/>
</dbReference>
<dbReference type="InterPro" id="IPR036621">
    <property type="entry name" value="Anticodon-bd_dom_sf"/>
</dbReference>
<dbReference type="InterPro" id="IPR015807">
    <property type="entry name" value="His-tRNA-ligase"/>
</dbReference>
<dbReference type="InterPro" id="IPR041715">
    <property type="entry name" value="HisRS-like_core"/>
</dbReference>
<dbReference type="InterPro" id="IPR004516">
    <property type="entry name" value="HisRS/HisZ"/>
</dbReference>
<dbReference type="NCBIfam" id="TIGR00442">
    <property type="entry name" value="hisS"/>
    <property type="match status" value="1"/>
</dbReference>
<dbReference type="PANTHER" id="PTHR43707:SF1">
    <property type="entry name" value="HISTIDINE--TRNA LIGASE, MITOCHONDRIAL-RELATED"/>
    <property type="match status" value="1"/>
</dbReference>
<dbReference type="PANTHER" id="PTHR43707">
    <property type="entry name" value="HISTIDYL-TRNA SYNTHETASE"/>
    <property type="match status" value="1"/>
</dbReference>
<dbReference type="Pfam" id="PF03129">
    <property type="entry name" value="HGTP_anticodon"/>
    <property type="match status" value="1"/>
</dbReference>
<dbReference type="Pfam" id="PF13393">
    <property type="entry name" value="tRNA-synt_His"/>
    <property type="match status" value="1"/>
</dbReference>
<dbReference type="PIRSF" id="PIRSF001549">
    <property type="entry name" value="His-tRNA_synth"/>
    <property type="match status" value="1"/>
</dbReference>
<dbReference type="SUPFAM" id="SSF52954">
    <property type="entry name" value="Class II aaRS ABD-related"/>
    <property type="match status" value="1"/>
</dbReference>
<dbReference type="SUPFAM" id="SSF55681">
    <property type="entry name" value="Class II aaRS and biotin synthetases"/>
    <property type="match status" value="1"/>
</dbReference>
<dbReference type="PROSITE" id="PS50862">
    <property type="entry name" value="AA_TRNA_LIGASE_II"/>
    <property type="match status" value="1"/>
</dbReference>